<protein>
    <recommendedName>
        <fullName evidence="1">Small ribosomal subunit protein uS7</fullName>
    </recommendedName>
    <alternativeName>
        <fullName evidence="2">30S ribosomal protein S7</fullName>
    </alternativeName>
</protein>
<proteinExistence type="inferred from homology"/>
<keyword id="KW-1185">Reference proteome</keyword>
<keyword id="KW-0687">Ribonucleoprotein</keyword>
<keyword id="KW-0689">Ribosomal protein</keyword>
<keyword id="KW-0694">RNA-binding</keyword>
<keyword id="KW-0699">rRNA-binding</keyword>
<keyword id="KW-0820">tRNA-binding</keyword>
<sequence>MPRKGHIAKREPLADPVYGSTLANKFVNSMMWDGKKSTAQGIFYEAMKKLEAKGGGEEAIKLFKKAVENAKPLLEVKTRRVGGANYQVPVEVNADRRTSLAIRWLISYSRGRGEKGMIDKLANELLDAANGRGAAIKKKEDVHRMAEANKAFAHYRW</sequence>
<organism>
    <name type="scientific">Koribacter versatilis (strain Ellin345)</name>
    <dbReference type="NCBI Taxonomy" id="204669"/>
    <lineage>
        <taxon>Bacteria</taxon>
        <taxon>Pseudomonadati</taxon>
        <taxon>Acidobacteriota</taxon>
        <taxon>Terriglobia</taxon>
        <taxon>Terriglobales</taxon>
        <taxon>Candidatus Korobacteraceae</taxon>
        <taxon>Candidatus Korobacter</taxon>
    </lineage>
</organism>
<dbReference type="EMBL" id="CP000360">
    <property type="protein sequence ID" value="ABF40224.1"/>
    <property type="molecule type" value="Genomic_DNA"/>
</dbReference>
<dbReference type="RefSeq" id="WP_011522026.1">
    <property type="nucleotide sequence ID" value="NC_008009.1"/>
</dbReference>
<dbReference type="SMR" id="Q1ISC6"/>
<dbReference type="STRING" id="204669.Acid345_1222"/>
<dbReference type="EnsemblBacteria" id="ABF40224">
    <property type="protein sequence ID" value="ABF40224"/>
    <property type="gene ID" value="Acid345_1222"/>
</dbReference>
<dbReference type="KEGG" id="aba:Acid345_1222"/>
<dbReference type="eggNOG" id="COG0049">
    <property type="taxonomic scope" value="Bacteria"/>
</dbReference>
<dbReference type="HOGENOM" id="CLU_072226_1_1_0"/>
<dbReference type="OrthoDB" id="9807653at2"/>
<dbReference type="Proteomes" id="UP000002432">
    <property type="component" value="Chromosome"/>
</dbReference>
<dbReference type="GO" id="GO:0015935">
    <property type="term" value="C:small ribosomal subunit"/>
    <property type="evidence" value="ECO:0007669"/>
    <property type="project" value="InterPro"/>
</dbReference>
<dbReference type="GO" id="GO:0019843">
    <property type="term" value="F:rRNA binding"/>
    <property type="evidence" value="ECO:0007669"/>
    <property type="project" value="UniProtKB-UniRule"/>
</dbReference>
<dbReference type="GO" id="GO:0003735">
    <property type="term" value="F:structural constituent of ribosome"/>
    <property type="evidence" value="ECO:0007669"/>
    <property type="project" value="InterPro"/>
</dbReference>
<dbReference type="GO" id="GO:0000049">
    <property type="term" value="F:tRNA binding"/>
    <property type="evidence" value="ECO:0007669"/>
    <property type="project" value="UniProtKB-UniRule"/>
</dbReference>
<dbReference type="GO" id="GO:0006412">
    <property type="term" value="P:translation"/>
    <property type="evidence" value="ECO:0007669"/>
    <property type="project" value="UniProtKB-UniRule"/>
</dbReference>
<dbReference type="CDD" id="cd14869">
    <property type="entry name" value="uS7_Bacteria"/>
    <property type="match status" value="1"/>
</dbReference>
<dbReference type="FunFam" id="1.10.455.10:FF:000001">
    <property type="entry name" value="30S ribosomal protein S7"/>
    <property type="match status" value="1"/>
</dbReference>
<dbReference type="Gene3D" id="1.10.455.10">
    <property type="entry name" value="Ribosomal protein S7 domain"/>
    <property type="match status" value="1"/>
</dbReference>
<dbReference type="HAMAP" id="MF_00480_B">
    <property type="entry name" value="Ribosomal_uS7_B"/>
    <property type="match status" value="1"/>
</dbReference>
<dbReference type="InterPro" id="IPR000235">
    <property type="entry name" value="Ribosomal_uS7"/>
</dbReference>
<dbReference type="InterPro" id="IPR005717">
    <property type="entry name" value="Ribosomal_uS7_bac/org-type"/>
</dbReference>
<dbReference type="InterPro" id="IPR020606">
    <property type="entry name" value="Ribosomal_uS7_CS"/>
</dbReference>
<dbReference type="InterPro" id="IPR023798">
    <property type="entry name" value="Ribosomal_uS7_dom"/>
</dbReference>
<dbReference type="InterPro" id="IPR036823">
    <property type="entry name" value="Ribosomal_uS7_dom_sf"/>
</dbReference>
<dbReference type="NCBIfam" id="TIGR01029">
    <property type="entry name" value="rpsG_bact"/>
    <property type="match status" value="1"/>
</dbReference>
<dbReference type="PANTHER" id="PTHR11205">
    <property type="entry name" value="RIBOSOMAL PROTEIN S7"/>
    <property type="match status" value="1"/>
</dbReference>
<dbReference type="Pfam" id="PF00177">
    <property type="entry name" value="Ribosomal_S7"/>
    <property type="match status" value="1"/>
</dbReference>
<dbReference type="PIRSF" id="PIRSF002122">
    <property type="entry name" value="RPS7p_RPS7a_RPS5e_RPS7o"/>
    <property type="match status" value="1"/>
</dbReference>
<dbReference type="SUPFAM" id="SSF47973">
    <property type="entry name" value="Ribosomal protein S7"/>
    <property type="match status" value="1"/>
</dbReference>
<dbReference type="PROSITE" id="PS00052">
    <property type="entry name" value="RIBOSOMAL_S7"/>
    <property type="match status" value="1"/>
</dbReference>
<name>RS7_KORVE</name>
<comment type="function">
    <text evidence="1">One of the primary rRNA binding proteins, it binds directly to 16S rRNA where it nucleates assembly of the head domain of the 30S subunit. Is located at the subunit interface close to the decoding center, probably blocks exit of the E-site tRNA.</text>
</comment>
<comment type="subunit">
    <text evidence="1">Part of the 30S ribosomal subunit. Contacts proteins S9 and S11.</text>
</comment>
<comment type="similarity">
    <text evidence="1">Belongs to the universal ribosomal protein uS7 family.</text>
</comment>
<evidence type="ECO:0000255" key="1">
    <source>
        <dbReference type="HAMAP-Rule" id="MF_00480"/>
    </source>
</evidence>
<evidence type="ECO:0000305" key="2"/>
<feature type="chain" id="PRO_1000014133" description="Small ribosomal subunit protein uS7">
    <location>
        <begin position="1"/>
        <end position="157"/>
    </location>
</feature>
<accession>Q1ISC6</accession>
<gene>
    <name evidence="1" type="primary">rpsG</name>
    <name type="ordered locus">Acid345_1222</name>
</gene>
<reference key="1">
    <citation type="journal article" date="2009" name="Appl. Environ. Microbiol.">
        <title>Three genomes from the phylum Acidobacteria provide insight into the lifestyles of these microorganisms in soils.</title>
        <authorList>
            <person name="Ward N.L."/>
            <person name="Challacombe J.F."/>
            <person name="Janssen P.H."/>
            <person name="Henrissat B."/>
            <person name="Coutinho P.M."/>
            <person name="Wu M."/>
            <person name="Xie G."/>
            <person name="Haft D.H."/>
            <person name="Sait M."/>
            <person name="Badger J."/>
            <person name="Barabote R.D."/>
            <person name="Bradley B."/>
            <person name="Brettin T.S."/>
            <person name="Brinkac L.M."/>
            <person name="Bruce D."/>
            <person name="Creasy T."/>
            <person name="Daugherty S.C."/>
            <person name="Davidsen T.M."/>
            <person name="DeBoy R.T."/>
            <person name="Detter J.C."/>
            <person name="Dodson R.J."/>
            <person name="Durkin A.S."/>
            <person name="Ganapathy A."/>
            <person name="Gwinn-Giglio M."/>
            <person name="Han C.S."/>
            <person name="Khouri H."/>
            <person name="Kiss H."/>
            <person name="Kothari S.P."/>
            <person name="Madupu R."/>
            <person name="Nelson K.E."/>
            <person name="Nelson W.C."/>
            <person name="Paulsen I."/>
            <person name="Penn K."/>
            <person name="Ren Q."/>
            <person name="Rosovitz M.J."/>
            <person name="Selengut J.D."/>
            <person name="Shrivastava S."/>
            <person name="Sullivan S.A."/>
            <person name="Tapia R."/>
            <person name="Thompson L.S."/>
            <person name="Watkins K.L."/>
            <person name="Yang Q."/>
            <person name="Yu C."/>
            <person name="Zafar N."/>
            <person name="Zhou L."/>
            <person name="Kuske C.R."/>
        </authorList>
    </citation>
    <scope>NUCLEOTIDE SEQUENCE [LARGE SCALE GENOMIC DNA]</scope>
    <source>
        <strain>Ellin345</strain>
    </source>
</reference>